<feature type="chain" id="PRO_0000137890" description="Adenylosuccinate lyase">
    <location>
        <begin position="1"/>
        <end position="450"/>
    </location>
</feature>
<feature type="active site" description="Proton donor/acceptor" evidence="2">
    <location>
        <position position="149"/>
    </location>
</feature>
<feature type="active site" description="Proton donor/acceptor" evidence="2">
    <location>
        <position position="273"/>
    </location>
</feature>
<feature type="binding site" evidence="2">
    <location>
        <begin position="9"/>
        <end position="10"/>
    </location>
    <ligand>
        <name>N(6)-(1,2-dicarboxyethyl)-AMP</name>
        <dbReference type="ChEBI" id="CHEBI:57567"/>
    </ligand>
</feature>
<feature type="binding site" evidence="2">
    <location>
        <begin position="75"/>
        <end position="77"/>
    </location>
    <ligand>
        <name>N(6)-(1,2-dicarboxyethyl)-AMP</name>
        <dbReference type="ChEBI" id="CHEBI:57567"/>
    </ligand>
</feature>
<feature type="binding site" evidence="2">
    <location>
        <begin position="101"/>
        <end position="102"/>
    </location>
    <ligand>
        <name>N(6)-(1,2-dicarboxyethyl)-AMP</name>
        <dbReference type="ChEBI" id="CHEBI:57567"/>
    </ligand>
</feature>
<feature type="binding site" evidence="2">
    <location>
        <position position="223"/>
    </location>
    <ligand>
        <name>N(6)-(1,2-dicarboxyethyl)-AMP</name>
        <dbReference type="ChEBI" id="CHEBI:57567"/>
    </ligand>
</feature>
<feature type="binding site" evidence="2">
    <location>
        <position position="274"/>
    </location>
    <ligand>
        <name>N(6)-(1,2-dicarboxyethyl)-AMP</name>
        <dbReference type="ChEBI" id="CHEBI:57567"/>
    </ligand>
</feature>
<feature type="binding site" evidence="2">
    <location>
        <begin position="279"/>
        <end position="281"/>
    </location>
    <ligand>
        <name>N(6)-(1,2-dicarboxyethyl)-AMP</name>
        <dbReference type="ChEBI" id="CHEBI:57567"/>
    </ligand>
</feature>
<feature type="binding site" evidence="2">
    <location>
        <begin position="318"/>
        <end position="322"/>
    </location>
    <ligand>
        <name>N(6)-(1,2-dicarboxyethyl)-AMP</name>
        <dbReference type="ChEBI" id="CHEBI:57567"/>
    </ligand>
</feature>
<reference key="1">
    <citation type="journal article" date="2003" name="Mol. Microbiol.">
        <title>An integrated analysis of the genome of the hyperthermophilic archaeon Pyrococcus abyssi.</title>
        <authorList>
            <person name="Cohen G.N."/>
            <person name="Barbe V."/>
            <person name="Flament D."/>
            <person name="Galperin M."/>
            <person name="Heilig R."/>
            <person name="Lecompte O."/>
            <person name="Poch O."/>
            <person name="Prieur D."/>
            <person name="Querellou J."/>
            <person name="Ripp R."/>
            <person name="Thierry J.-C."/>
            <person name="Van der Oost J."/>
            <person name="Weissenbach J."/>
            <person name="Zivanovic Y."/>
            <person name="Forterre P."/>
        </authorList>
    </citation>
    <scope>NUCLEOTIDE SEQUENCE [LARGE SCALE GENOMIC DNA]</scope>
    <source>
        <strain>GE5 / Orsay</strain>
    </source>
</reference>
<reference key="2">
    <citation type="journal article" date="2012" name="Curr. Microbiol.">
        <title>Re-annotation of two hyperthermophilic archaea Pyrococcus abyssi GE5 and Pyrococcus furiosus DSM 3638.</title>
        <authorList>
            <person name="Gao J."/>
            <person name="Wang J."/>
        </authorList>
    </citation>
    <scope>GENOME REANNOTATION</scope>
    <source>
        <strain>GE5 / Orsay</strain>
    </source>
</reference>
<organism>
    <name type="scientific">Pyrococcus abyssi (strain GE5 / Orsay)</name>
    <dbReference type="NCBI Taxonomy" id="272844"/>
    <lineage>
        <taxon>Archaea</taxon>
        <taxon>Methanobacteriati</taxon>
        <taxon>Methanobacteriota</taxon>
        <taxon>Thermococci</taxon>
        <taxon>Thermococcales</taxon>
        <taxon>Thermococcaceae</taxon>
        <taxon>Pyrococcus</taxon>
    </lineage>
</organism>
<protein>
    <recommendedName>
        <fullName>Adenylosuccinate lyase</fullName>
        <shortName>ASL</shortName>
        <ecNumber evidence="2">4.3.2.2</ecNumber>
    </recommendedName>
    <alternativeName>
        <fullName>Adenylosuccinase</fullName>
        <shortName>ASase</shortName>
    </alternativeName>
</protein>
<accession>Q9UZ99</accession>
<accession>G8ZKP9</accession>
<evidence type="ECO:0000250" key="1"/>
<evidence type="ECO:0000250" key="2">
    <source>
        <dbReference type="UniProtKB" id="P0AB89"/>
    </source>
</evidence>
<evidence type="ECO:0000305" key="3"/>
<proteinExistence type="inferred from homology"/>
<keyword id="KW-0456">Lyase</keyword>
<keyword id="KW-0658">Purine biosynthesis</keyword>
<gene>
    <name type="primary">purB</name>
    <name type="ordered locus">PYRAB12550</name>
    <name type="ORF">PAB0829</name>
</gene>
<comment type="function">
    <text evidence="2">Catalyzes two reactions in de novo purine nucleotide biosynthesis. Catalyzes the breakdown of 5-aminoimidazole- (N-succinylocarboxamide) ribotide (SAICAR or 2-[5-amino-1-(5-phospho-beta-D-ribosyl)imidazole-4-carboxamido]succinate) to 5-aminoimidazole-4-carboxamide ribotide (AICAR or 5-amino-1-(5-phospho-beta-D-ribosyl)imidazole-4-carboxamide) and fumarate, and of adenylosuccinate (ADS or N(6)-(1,2-dicarboxyethyl)-AMP) to adenosine monophosphate (AMP) and fumarate.</text>
</comment>
<comment type="catalytic activity">
    <reaction evidence="2">
        <text>N(6)-(1,2-dicarboxyethyl)-AMP = fumarate + AMP</text>
        <dbReference type="Rhea" id="RHEA:16853"/>
        <dbReference type="ChEBI" id="CHEBI:29806"/>
        <dbReference type="ChEBI" id="CHEBI:57567"/>
        <dbReference type="ChEBI" id="CHEBI:456215"/>
        <dbReference type="EC" id="4.3.2.2"/>
    </reaction>
    <physiologicalReaction direction="left-to-right" evidence="2">
        <dbReference type="Rhea" id="RHEA:16854"/>
    </physiologicalReaction>
</comment>
<comment type="catalytic activity">
    <reaction evidence="2">
        <text>(2S)-2-[5-amino-1-(5-phospho-beta-D-ribosyl)imidazole-4-carboxamido]succinate = 5-amino-1-(5-phospho-beta-D-ribosyl)imidazole-4-carboxamide + fumarate</text>
        <dbReference type="Rhea" id="RHEA:23920"/>
        <dbReference type="ChEBI" id="CHEBI:29806"/>
        <dbReference type="ChEBI" id="CHEBI:58443"/>
        <dbReference type="ChEBI" id="CHEBI:58475"/>
        <dbReference type="EC" id="4.3.2.2"/>
    </reaction>
    <physiologicalReaction direction="left-to-right" evidence="2">
        <dbReference type="Rhea" id="RHEA:23921"/>
    </physiologicalReaction>
</comment>
<comment type="pathway">
    <text>Purine metabolism; AMP biosynthesis via de novo pathway; AMP from IMP: step 2/2.</text>
</comment>
<comment type="pathway">
    <text>Purine metabolism; IMP biosynthesis via de novo pathway; 5-amino-1-(5-phospho-D-ribosyl)imidazole-4-carboxamide from 5-amino-1-(5-phospho-D-ribosyl)imidazole-4-carboxylate: step 2/2.</text>
</comment>
<comment type="subunit">
    <text evidence="1">Homotetramer. Residues from neighboring subunits contribute catalytic and substrate-binding residues to each active site (By similarity).</text>
</comment>
<comment type="similarity">
    <text evidence="3">Belongs to the lyase 1 family. Adenylosuccinate lyase subfamily.</text>
</comment>
<sequence>MAVHPIDYRYGSEEMRRVWEEENKLQKLLDVEAALARAHAKLGNIPEESARVISERANTKWVKLERVKEIEAEIHHDIMAVVKALSEVCGEHGKYVHLGATSNDIIDTANALLIKESLAIVEKDLKELRSILKELAKKHIDTVCIGRTHGQHAVPTTYGMKFALWLDEIQRHIERLQQLKDRVLVGKMRGAVGTAASFGDKAFEIEKLVMEDLGLKPARITNQIIQRDVYAELMFFLALVASTLDKMALEIRNLQRTEILEVSEPFGEKQVGSSTMPHKRNPIRTEKVCGLARVLYSNVIPALLNNPLWHERDLTNSSVERVILPESFVLLDEMLKVMKKVLKGLEFFPENIKRNLYLTKNLIMAEPLMLKLAEKGMGRQEAHELVRQLAMKAFKEGRDLLEVVRKNEEAMKYLTENDLEGLKPENYIGKAREIVENVVNYVEEMERRGL</sequence>
<dbReference type="EC" id="4.3.2.2" evidence="2"/>
<dbReference type="EMBL" id="AJ248287">
    <property type="protein sequence ID" value="CAB50160.1"/>
    <property type="molecule type" value="Genomic_DNA"/>
</dbReference>
<dbReference type="EMBL" id="HE613800">
    <property type="protein sequence ID" value="CCE70692.1"/>
    <property type="molecule type" value="Genomic_DNA"/>
</dbReference>
<dbReference type="PIR" id="C75033">
    <property type="entry name" value="C75033"/>
</dbReference>
<dbReference type="RefSeq" id="WP_010868368.1">
    <property type="nucleotide sequence ID" value="NC_000868.1"/>
</dbReference>
<dbReference type="SMR" id="Q9UZ99"/>
<dbReference type="STRING" id="272844.PAB0829"/>
<dbReference type="KEGG" id="pab:PAB0829"/>
<dbReference type="PATRIC" id="fig|272844.11.peg.1335"/>
<dbReference type="eggNOG" id="arCOG01747">
    <property type="taxonomic scope" value="Archaea"/>
</dbReference>
<dbReference type="HOGENOM" id="CLU_030949_0_1_2"/>
<dbReference type="OrthoDB" id="7033at2157"/>
<dbReference type="PhylomeDB" id="Q9UZ99"/>
<dbReference type="UniPathway" id="UPA00074">
    <property type="reaction ID" value="UER00132"/>
</dbReference>
<dbReference type="UniPathway" id="UPA00075">
    <property type="reaction ID" value="UER00336"/>
</dbReference>
<dbReference type="Proteomes" id="UP000000810">
    <property type="component" value="Chromosome"/>
</dbReference>
<dbReference type="Proteomes" id="UP000009139">
    <property type="component" value="Chromosome"/>
</dbReference>
<dbReference type="GO" id="GO:0005829">
    <property type="term" value="C:cytosol"/>
    <property type="evidence" value="ECO:0007669"/>
    <property type="project" value="TreeGrafter"/>
</dbReference>
<dbReference type="GO" id="GO:0070626">
    <property type="term" value="F:(S)-2-(5-amino-1-(5-phospho-D-ribosyl)imidazole-4-carboxamido) succinate lyase (fumarate-forming) activity"/>
    <property type="evidence" value="ECO:0007669"/>
    <property type="project" value="TreeGrafter"/>
</dbReference>
<dbReference type="GO" id="GO:0004018">
    <property type="term" value="F:N6-(1,2-dicarboxyethyl)AMP AMP-lyase (fumarate-forming) activity"/>
    <property type="evidence" value="ECO:0007669"/>
    <property type="project" value="InterPro"/>
</dbReference>
<dbReference type="GO" id="GO:0044208">
    <property type="term" value="P:'de novo' AMP biosynthetic process"/>
    <property type="evidence" value="ECO:0007669"/>
    <property type="project" value="UniProtKB-UniPathway"/>
</dbReference>
<dbReference type="GO" id="GO:0006189">
    <property type="term" value="P:'de novo' IMP biosynthetic process"/>
    <property type="evidence" value="ECO:0007669"/>
    <property type="project" value="UniProtKB-UniPathway"/>
</dbReference>
<dbReference type="CDD" id="cd01360">
    <property type="entry name" value="Adenylsuccinate_lyase_1"/>
    <property type="match status" value="1"/>
</dbReference>
<dbReference type="FunFam" id="1.10.275.10:FF:000012">
    <property type="entry name" value="Adenylosuccinate lyase"/>
    <property type="match status" value="1"/>
</dbReference>
<dbReference type="FunFam" id="1.10.40.30:FF:000007">
    <property type="entry name" value="Adenylosuccinate lyase"/>
    <property type="match status" value="1"/>
</dbReference>
<dbReference type="FunFam" id="1.20.200.10:FF:000008">
    <property type="entry name" value="Adenylosuccinate lyase"/>
    <property type="match status" value="1"/>
</dbReference>
<dbReference type="Gene3D" id="1.10.40.30">
    <property type="entry name" value="Fumarase/aspartase (C-terminal domain)"/>
    <property type="match status" value="1"/>
</dbReference>
<dbReference type="Gene3D" id="1.20.200.10">
    <property type="entry name" value="Fumarase/aspartase (Central domain)"/>
    <property type="match status" value="1"/>
</dbReference>
<dbReference type="Gene3D" id="1.10.275.10">
    <property type="entry name" value="Fumarase/aspartase (N-terminal domain)"/>
    <property type="match status" value="1"/>
</dbReference>
<dbReference type="InterPro" id="IPR019468">
    <property type="entry name" value="AdenyloSucc_lyase_C"/>
</dbReference>
<dbReference type="InterPro" id="IPR024083">
    <property type="entry name" value="Fumarase/histidase_N"/>
</dbReference>
<dbReference type="InterPro" id="IPR020557">
    <property type="entry name" value="Fumarate_lyase_CS"/>
</dbReference>
<dbReference type="InterPro" id="IPR000362">
    <property type="entry name" value="Fumarate_lyase_fam"/>
</dbReference>
<dbReference type="InterPro" id="IPR022761">
    <property type="entry name" value="Fumarate_lyase_N"/>
</dbReference>
<dbReference type="InterPro" id="IPR008948">
    <property type="entry name" value="L-Aspartase-like"/>
</dbReference>
<dbReference type="InterPro" id="IPR004769">
    <property type="entry name" value="Pur_lyase"/>
</dbReference>
<dbReference type="NCBIfam" id="TIGR00928">
    <property type="entry name" value="purB"/>
    <property type="match status" value="1"/>
</dbReference>
<dbReference type="PANTHER" id="PTHR43172">
    <property type="entry name" value="ADENYLOSUCCINATE LYASE"/>
    <property type="match status" value="1"/>
</dbReference>
<dbReference type="PANTHER" id="PTHR43172:SF1">
    <property type="entry name" value="ADENYLOSUCCINATE LYASE"/>
    <property type="match status" value="1"/>
</dbReference>
<dbReference type="Pfam" id="PF10397">
    <property type="entry name" value="ADSL_C"/>
    <property type="match status" value="1"/>
</dbReference>
<dbReference type="Pfam" id="PF00206">
    <property type="entry name" value="Lyase_1"/>
    <property type="match status" value="1"/>
</dbReference>
<dbReference type="PRINTS" id="PR00145">
    <property type="entry name" value="ARGSUCLYASE"/>
</dbReference>
<dbReference type="PRINTS" id="PR00149">
    <property type="entry name" value="FUMRATELYASE"/>
</dbReference>
<dbReference type="SMART" id="SM00998">
    <property type="entry name" value="ADSL_C"/>
    <property type="match status" value="1"/>
</dbReference>
<dbReference type="SUPFAM" id="SSF48557">
    <property type="entry name" value="L-aspartase-like"/>
    <property type="match status" value="1"/>
</dbReference>
<dbReference type="PROSITE" id="PS00163">
    <property type="entry name" value="FUMARATE_LYASES"/>
    <property type="match status" value="1"/>
</dbReference>
<name>PUR8_PYRAB</name>